<protein>
    <recommendedName>
        <fullName>DNA replication regulator SLD2</fullName>
    </recommendedName>
</protein>
<name>SLD2_DEBHA</name>
<sequence>MPHQESITQLKQAIKVWEHEFQRSNNRIPSRSDIKVDPKVYELYKTYKVLKAKTNNVRNIQDKRTLESANIGIDINMSESQSDAEDVEEFNNENSDSSNNKLKNQDTELGPTPQANGKVLSILDIRLTPPDSSPLKNKVGSRSTDTYSNQKDEAPEDTFKTPTKTRVNRINLSELTPTNNRGPRNKSLMQKLEQASSAKNTRIEMHTPERNKVSLLQNMETPQYLAKVNNKFNFDMDDDSNDKDNVVAEDLHTNSSMKIISSIRSNIIDPITPTKSPAPLKFQVSPSPLKPHRLFSFGNNRKLSDIFNDYKNIKEDPDLINSIENEEEAAELDDDDDTIEKDTATNGPKRKRITQKRTTRRWKIKPNTEETKEDKLKNANIHDEVKKLDDEARKNLVDYMEVNNMHEEDETTSEEEYVHQDPNHKDMKGKVKPVRMNYQRLKINDPRIKKFKKRMQNRR</sequence>
<comment type="function">
    <text evidence="1">Has a role in the initiation of DNA replication. Required at S-phase checkpoint (By similarity).</text>
</comment>
<comment type="subcellular location">
    <subcellularLocation>
        <location>Cytoplasm</location>
    </subcellularLocation>
    <subcellularLocation>
        <location evidence="1">Nucleus</location>
    </subcellularLocation>
</comment>
<comment type="similarity">
    <text evidence="3">Belongs to the SLD2 family.</text>
</comment>
<organism>
    <name type="scientific">Debaryomyces hansenii (strain ATCC 36239 / CBS 767 / BCRC 21394 / JCM 1990 / NBRC 0083 / IGC 2968)</name>
    <name type="common">Yeast</name>
    <name type="synonym">Torulaspora hansenii</name>
    <dbReference type="NCBI Taxonomy" id="284592"/>
    <lineage>
        <taxon>Eukaryota</taxon>
        <taxon>Fungi</taxon>
        <taxon>Dikarya</taxon>
        <taxon>Ascomycota</taxon>
        <taxon>Saccharomycotina</taxon>
        <taxon>Pichiomycetes</taxon>
        <taxon>Debaryomycetaceae</taxon>
        <taxon>Debaryomyces</taxon>
    </lineage>
</organism>
<feature type="chain" id="PRO_0000278433" description="DNA replication regulator SLD2">
    <location>
        <begin position="1"/>
        <end position="459"/>
    </location>
</feature>
<feature type="region of interest" description="Disordered" evidence="2">
    <location>
        <begin position="79"/>
        <end position="208"/>
    </location>
</feature>
<feature type="region of interest" description="Disordered" evidence="2">
    <location>
        <begin position="327"/>
        <end position="358"/>
    </location>
</feature>
<feature type="region of interest" description="Disordered" evidence="2">
    <location>
        <begin position="407"/>
        <end position="459"/>
    </location>
</feature>
<feature type="compositionally biased region" description="Acidic residues" evidence="2">
    <location>
        <begin position="82"/>
        <end position="91"/>
    </location>
</feature>
<feature type="compositionally biased region" description="Polar residues" evidence="2">
    <location>
        <begin position="140"/>
        <end position="149"/>
    </location>
</feature>
<feature type="compositionally biased region" description="Basic and acidic residues" evidence="2">
    <location>
        <begin position="150"/>
        <end position="159"/>
    </location>
</feature>
<feature type="compositionally biased region" description="Polar residues" evidence="2">
    <location>
        <begin position="160"/>
        <end position="182"/>
    </location>
</feature>
<feature type="compositionally biased region" description="Acidic residues" evidence="2">
    <location>
        <begin position="327"/>
        <end position="339"/>
    </location>
</feature>
<feature type="compositionally biased region" description="Basic residues" evidence="2">
    <location>
        <begin position="348"/>
        <end position="358"/>
    </location>
</feature>
<feature type="compositionally biased region" description="Basic and acidic residues" evidence="2">
    <location>
        <begin position="416"/>
        <end position="429"/>
    </location>
</feature>
<feature type="compositionally biased region" description="Basic residues" evidence="2">
    <location>
        <begin position="449"/>
        <end position="459"/>
    </location>
</feature>
<keyword id="KW-0131">Cell cycle</keyword>
<keyword id="KW-0963">Cytoplasm</keyword>
<keyword id="KW-0235">DNA replication</keyword>
<keyword id="KW-0539">Nucleus</keyword>
<keyword id="KW-1185">Reference proteome</keyword>
<proteinExistence type="inferred from homology"/>
<accession>Q6BXN9</accession>
<reference key="1">
    <citation type="journal article" date="2004" name="Nature">
        <title>Genome evolution in yeasts.</title>
        <authorList>
            <person name="Dujon B."/>
            <person name="Sherman D."/>
            <person name="Fischer G."/>
            <person name="Durrens P."/>
            <person name="Casaregola S."/>
            <person name="Lafontaine I."/>
            <person name="de Montigny J."/>
            <person name="Marck C."/>
            <person name="Neuveglise C."/>
            <person name="Talla E."/>
            <person name="Goffard N."/>
            <person name="Frangeul L."/>
            <person name="Aigle M."/>
            <person name="Anthouard V."/>
            <person name="Babour A."/>
            <person name="Barbe V."/>
            <person name="Barnay S."/>
            <person name="Blanchin S."/>
            <person name="Beckerich J.-M."/>
            <person name="Beyne E."/>
            <person name="Bleykasten C."/>
            <person name="Boisrame A."/>
            <person name="Boyer J."/>
            <person name="Cattolico L."/>
            <person name="Confanioleri F."/>
            <person name="de Daruvar A."/>
            <person name="Despons L."/>
            <person name="Fabre E."/>
            <person name="Fairhead C."/>
            <person name="Ferry-Dumazet H."/>
            <person name="Groppi A."/>
            <person name="Hantraye F."/>
            <person name="Hennequin C."/>
            <person name="Jauniaux N."/>
            <person name="Joyet P."/>
            <person name="Kachouri R."/>
            <person name="Kerrest A."/>
            <person name="Koszul R."/>
            <person name="Lemaire M."/>
            <person name="Lesur I."/>
            <person name="Ma L."/>
            <person name="Muller H."/>
            <person name="Nicaud J.-M."/>
            <person name="Nikolski M."/>
            <person name="Oztas S."/>
            <person name="Ozier-Kalogeropoulos O."/>
            <person name="Pellenz S."/>
            <person name="Potier S."/>
            <person name="Richard G.-F."/>
            <person name="Straub M.-L."/>
            <person name="Suleau A."/>
            <person name="Swennen D."/>
            <person name="Tekaia F."/>
            <person name="Wesolowski-Louvel M."/>
            <person name="Westhof E."/>
            <person name="Wirth B."/>
            <person name="Zeniou-Meyer M."/>
            <person name="Zivanovic Y."/>
            <person name="Bolotin-Fukuhara M."/>
            <person name="Thierry A."/>
            <person name="Bouchier C."/>
            <person name="Caudron B."/>
            <person name="Scarpelli C."/>
            <person name="Gaillardin C."/>
            <person name="Weissenbach J."/>
            <person name="Wincker P."/>
            <person name="Souciet J.-L."/>
        </authorList>
    </citation>
    <scope>NUCLEOTIDE SEQUENCE [LARGE SCALE GENOMIC DNA]</scope>
    <source>
        <strain>ATCC 36239 / CBS 767 / BCRC 21394 / JCM 1990 / NBRC 0083 / IGC 2968</strain>
    </source>
</reference>
<evidence type="ECO:0000250" key="1"/>
<evidence type="ECO:0000256" key="2">
    <source>
        <dbReference type="SAM" id="MobiDB-lite"/>
    </source>
</evidence>
<evidence type="ECO:0000305" key="3"/>
<gene>
    <name type="primary">SLD2</name>
    <name type="ordered locus">DEHA2B01474g</name>
</gene>
<dbReference type="EMBL" id="CR382134">
    <property type="protein sequence ID" value="CAG85016.2"/>
    <property type="molecule type" value="Genomic_DNA"/>
</dbReference>
<dbReference type="RefSeq" id="XP_457030.2">
    <property type="nucleotide sequence ID" value="XM_457030.1"/>
</dbReference>
<dbReference type="SMR" id="Q6BXN9"/>
<dbReference type="FunCoup" id="Q6BXN9">
    <property type="interactions" value="61"/>
</dbReference>
<dbReference type="STRING" id="284592.Q6BXN9"/>
<dbReference type="GeneID" id="2913723"/>
<dbReference type="KEGG" id="dha:DEHA2B01474g"/>
<dbReference type="VEuPathDB" id="FungiDB:DEHA2B01474g"/>
<dbReference type="eggNOG" id="ENOG502SCF7">
    <property type="taxonomic scope" value="Eukaryota"/>
</dbReference>
<dbReference type="HOGENOM" id="CLU_667493_0_0_1"/>
<dbReference type="InParanoid" id="Q6BXN9"/>
<dbReference type="OMA" id="TWEHDFI"/>
<dbReference type="OrthoDB" id="8775810at2759"/>
<dbReference type="Proteomes" id="UP000000599">
    <property type="component" value="Chromosome B"/>
</dbReference>
<dbReference type="GO" id="GO:0005737">
    <property type="term" value="C:cytoplasm"/>
    <property type="evidence" value="ECO:0007669"/>
    <property type="project" value="UniProtKB-SubCell"/>
</dbReference>
<dbReference type="GO" id="GO:0031261">
    <property type="term" value="C:DNA replication preinitiation complex"/>
    <property type="evidence" value="ECO:0007669"/>
    <property type="project" value="TreeGrafter"/>
</dbReference>
<dbReference type="GO" id="GO:0003688">
    <property type="term" value="F:DNA replication origin binding"/>
    <property type="evidence" value="ECO:0007669"/>
    <property type="project" value="TreeGrafter"/>
</dbReference>
<dbReference type="GO" id="GO:0003697">
    <property type="term" value="F:single-stranded DNA binding"/>
    <property type="evidence" value="ECO:0007669"/>
    <property type="project" value="TreeGrafter"/>
</dbReference>
<dbReference type="GO" id="GO:0006270">
    <property type="term" value="P:DNA replication initiation"/>
    <property type="evidence" value="ECO:0007669"/>
    <property type="project" value="InterPro"/>
</dbReference>
<dbReference type="GO" id="GO:0000727">
    <property type="term" value="P:double-strand break repair via break-induced replication"/>
    <property type="evidence" value="ECO:0007669"/>
    <property type="project" value="TreeGrafter"/>
</dbReference>
<dbReference type="GO" id="GO:1902977">
    <property type="term" value="P:mitotic DNA replication preinitiation complex assembly"/>
    <property type="evidence" value="ECO:0007669"/>
    <property type="project" value="TreeGrafter"/>
</dbReference>
<dbReference type="CDD" id="cd22289">
    <property type="entry name" value="RecQL4_SLD2_NTD"/>
    <property type="match status" value="1"/>
</dbReference>
<dbReference type="Gene3D" id="1.10.10.1460">
    <property type="match status" value="1"/>
</dbReference>
<dbReference type="InterPro" id="IPR021110">
    <property type="entry name" value="DNA_rep_checkpnt_protein"/>
</dbReference>
<dbReference type="InterPro" id="IPR040203">
    <property type="entry name" value="Sld2"/>
</dbReference>
<dbReference type="PANTHER" id="PTHR28124">
    <property type="entry name" value="DNA REPLICATION REGULATOR SLD2"/>
    <property type="match status" value="1"/>
</dbReference>
<dbReference type="PANTHER" id="PTHR28124:SF1">
    <property type="entry name" value="DNA REPLICATION REGULATOR SLD2"/>
    <property type="match status" value="1"/>
</dbReference>
<dbReference type="Pfam" id="PF11719">
    <property type="entry name" value="Drc1-Sld2"/>
    <property type="match status" value="1"/>
</dbReference>